<organism>
    <name type="scientific">Oryza sativa subsp. japonica</name>
    <name type="common">Rice</name>
    <dbReference type="NCBI Taxonomy" id="39947"/>
    <lineage>
        <taxon>Eukaryota</taxon>
        <taxon>Viridiplantae</taxon>
        <taxon>Streptophyta</taxon>
        <taxon>Embryophyta</taxon>
        <taxon>Tracheophyta</taxon>
        <taxon>Spermatophyta</taxon>
        <taxon>Magnoliopsida</taxon>
        <taxon>Liliopsida</taxon>
        <taxon>Poales</taxon>
        <taxon>Poaceae</taxon>
        <taxon>BOP clade</taxon>
        <taxon>Oryzoideae</taxon>
        <taxon>Oryzeae</taxon>
        <taxon>Oryzinae</taxon>
        <taxon>Oryza</taxon>
        <taxon>Oryza sativa</taxon>
    </lineage>
</organism>
<protein>
    <recommendedName>
        <fullName>Probable anion transporter 4, chloroplastic</fullName>
    </recommendedName>
    <alternativeName>
        <fullName>Phosphate transporter 4;4</fullName>
    </alternativeName>
</protein>
<sequence length="591" mass="65424">MAMGAVLSSRTFASPLSSSGKQHPPQNNKCTCSSPPTRDKFSRLTTRTTIFQVSNYSRSTSMERFQLSARFHQPVVDSSTNYLTRWFYNANLKRRRIECFLTSDPINTGWLKPRRWDNFTSLDTACVQPDYKIPVRTRADCKAEQYEITGSPLSPSDVPAEAVLIGDTNEISPWWQQFPKRWTVVLLCFFSFLLCNMDRVNMSIAILPMSSEFGWSPATVGLIQSSFFWGYLLTQILGGIWADRFGGKVVLGFGVVWWSIATVLTPLAAKIGLPFLLVMRAFMGIGEGVAMPAMNNILSKWVPVSERSRSLALVYSGMYLGSVTGLAFSPLLISRFGWPSVFYAFGSLGSVWFALWQRKAHSSPSEDPELSKAEKRYILGGSTLKEPVTSIPWKLILSKPPVWALIVSHFCHNWGTFILLTWMPTYYNQVLKFNLTESGLLCVLPWLTMAIFANIGGWIADTLVGRGVSITNVRKIMQSIGFLGPALFLTLLSKVRTPAMAVLCMACSQGSDAFSQSGLYSNHQDIGPRYAGVLLGLSNTAGVLAGVFGTAATGYILQKGSWDSVFQVAVVLYIVGTVVWNVFSTGEKVLE</sequence>
<reference key="1">
    <citation type="journal article" date="2005" name="Nature">
        <title>The map-based sequence of the rice genome.</title>
        <authorList>
            <consortium name="International rice genome sequencing project (IRGSP)"/>
        </authorList>
    </citation>
    <scope>NUCLEOTIDE SEQUENCE [LARGE SCALE GENOMIC DNA]</scope>
    <source>
        <strain>cv. Nipponbare</strain>
    </source>
</reference>
<reference key="2">
    <citation type="journal article" date="2008" name="Nucleic Acids Res.">
        <title>The rice annotation project database (RAP-DB): 2008 update.</title>
        <authorList>
            <consortium name="The rice annotation project (RAP)"/>
        </authorList>
    </citation>
    <scope>GENOME REANNOTATION</scope>
    <source>
        <strain>cv. Nipponbare</strain>
    </source>
</reference>
<reference key="3">
    <citation type="journal article" date="2013" name="Rice">
        <title>Improvement of the Oryza sativa Nipponbare reference genome using next generation sequence and optical map data.</title>
        <authorList>
            <person name="Kawahara Y."/>
            <person name="de la Bastide M."/>
            <person name="Hamilton J.P."/>
            <person name="Kanamori H."/>
            <person name="McCombie W.R."/>
            <person name="Ouyang S."/>
            <person name="Schwartz D.C."/>
            <person name="Tanaka T."/>
            <person name="Wu J."/>
            <person name="Zhou S."/>
            <person name="Childs K.L."/>
            <person name="Davidson R.M."/>
            <person name="Lin H."/>
            <person name="Quesada-Ocampo L."/>
            <person name="Vaillancourt B."/>
            <person name="Sakai H."/>
            <person name="Lee S.S."/>
            <person name="Kim J."/>
            <person name="Numa H."/>
            <person name="Itoh T."/>
            <person name="Buell C.R."/>
            <person name="Matsumoto T."/>
        </authorList>
    </citation>
    <scope>GENOME REANNOTATION</scope>
    <source>
        <strain>cv. Nipponbare</strain>
    </source>
</reference>
<reference key="4">
    <citation type="journal article" date="2005" name="PLoS Biol.">
        <title>The genomes of Oryza sativa: a history of duplications.</title>
        <authorList>
            <person name="Yu J."/>
            <person name="Wang J."/>
            <person name="Lin W."/>
            <person name="Li S."/>
            <person name="Li H."/>
            <person name="Zhou J."/>
            <person name="Ni P."/>
            <person name="Dong W."/>
            <person name="Hu S."/>
            <person name="Zeng C."/>
            <person name="Zhang J."/>
            <person name="Zhang Y."/>
            <person name="Li R."/>
            <person name="Xu Z."/>
            <person name="Li S."/>
            <person name="Li X."/>
            <person name="Zheng H."/>
            <person name="Cong L."/>
            <person name="Lin L."/>
            <person name="Yin J."/>
            <person name="Geng J."/>
            <person name="Li G."/>
            <person name="Shi J."/>
            <person name="Liu J."/>
            <person name="Lv H."/>
            <person name="Li J."/>
            <person name="Wang J."/>
            <person name="Deng Y."/>
            <person name="Ran L."/>
            <person name="Shi X."/>
            <person name="Wang X."/>
            <person name="Wu Q."/>
            <person name="Li C."/>
            <person name="Ren X."/>
            <person name="Wang J."/>
            <person name="Wang X."/>
            <person name="Li D."/>
            <person name="Liu D."/>
            <person name="Zhang X."/>
            <person name="Ji Z."/>
            <person name="Zhao W."/>
            <person name="Sun Y."/>
            <person name="Zhang Z."/>
            <person name="Bao J."/>
            <person name="Han Y."/>
            <person name="Dong L."/>
            <person name="Ji J."/>
            <person name="Chen P."/>
            <person name="Wu S."/>
            <person name="Liu J."/>
            <person name="Xiao Y."/>
            <person name="Bu D."/>
            <person name="Tan J."/>
            <person name="Yang L."/>
            <person name="Ye C."/>
            <person name="Zhang J."/>
            <person name="Xu J."/>
            <person name="Zhou Y."/>
            <person name="Yu Y."/>
            <person name="Zhang B."/>
            <person name="Zhuang S."/>
            <person name="Wei H."/>
            <person name="Liu B."/>
            <person name="Lei M."/>
            <person name="Yu H."/>
            <person name="Li Y."/>
            <person name="Xu H."/>
            <person name="Wei S."/>
            <person name="He X."/>
            <person name="Fang L."/>
            <person name="Zhang Z."/>
            <person name="Zhang Y."/>
            <person name="Huang X."/>
            <person name="Su Z."/>
            <person name="Tong W."/>
            <person name="Li J."/>
            <person name="Tong Z."/>
            <person name="Li S."/>
            <person name="Ye J."/>
            <person name="Wang L."/>
            <person name="Fang L."/>
            <person name="Lei T."/>
            <person name="Chen C.-S."/>
            <person name="Chen H.-C."/>
            <person name="Xu Z."/>
            <person name="Li H."/>
            <person name="Huang H."/>
            <person name="Zhang F."/>
            <person name="Xu H."/>
            <person name="Li N."/>
            <person name="Zhao C."/>
            <person name="Li S."/>
            <person name="Dong L."/>
            <person name="Huang Y."/>
            <person name="Li L."/>
            <person name="Xi Y."/>
            <person name="Qi Q."/>
            <person name="Li W."/>
            <person name="Zhang B."/>
            <person name="Hu W."/>
            <person name="Zhang Y."/>
            <person name="Tian X."/>
            <person name="Jiao Y."/>
            <person name="Liang X."/>
            <person name="Jin J."/>
            <person name="Gao L."/>
            <person name="Zheng W."/>
            <person name="Hao B."/>
            <person name="Liu S.-M."/>
            <person name="Wang W."/>
            <person name="Yuan L."/>
            <person name="Cao M."/>
            <person name="McDermott J."/>
            <person name="Samudrala R."/>
            <person name="Wang J."/>
            <person name="Wong G.K.-S."/>
            <person name="Yang H."/>
        </authorList>
    </citation>
    <scope>NUCLEOTIDE SEQUENCE [LARGE SCALE GENOMIC DNA]</scope>
    <source>
        <strain>cv. Nipponbare</strain>
    </source>
</reference>
<reference key="5">
    <citation type="journal article" date="2003" name="Science">
        <title>Collection, mapping, and annotation of over 28,000 cDNA clones from japonica rice.</title>
        <authorList>
            <consortium name="The rice full-length cDNA consortium"/>
        </authorList>
    </citation>
    <scope>NUCLEOTIDE SEQUENCE [LARGE SCALE MRNA]</scope>
    <source>
        <strain>cv. Nipponbare</strain>
    </source>
</reference>
<reference key="6">
    <citation type="journal article" date="2008" name="Plant Signal. Behav.">
        <title>Differential expression and phylogenetic analysis suggest specialization of plastid-localized members of the PHT4 phosphate transporter family for photosynthetic and heterotrophic tissues.</title>
        <authorList>
            <person name="Guo B."/>
            <person name="Irigoyen S."/>
            <person name="Fowler T.B."/>
            <person name="Versaw W.K."/>
        </authorList>
    </citation>
    <scope>GENE FAMILY</scope>
    <scope>NOMENCLATURE</scope>
</reference>
<dbReference type="EMBL" id="AP005546">
    <property type="protein sequence ID" value="BAD46232.1"/>
    <property type="molecule type" value="Genomic_DNA"/>
</dbReference>
<dbReference type="EMBL" id="AP008215">
    <property type="protein sequence ID" value="BAF25900.1"/>
    <property type="molecule type" value="Genomic_DNA"/>
</dbReference>
<dbReference type="EMBL" id="AP014965">
    <property type="protein sequence ID" value="BAT09513.1"/>
    <property type="molecule type" value="Genomic_DNA"/>
</dbReference>
<dbReference type="EMBL" id="CM000146">
    <property type="protein sequence ID" value="EEE70272.1"/>
    <property type="molecule type" value="Genomic_DNA"/>
</dbReference>
<dbReference type="EMBL" id="AK065287">
    <property type="protein sequence ID" value="BAG89449.1"/>
    <property type="molecule type" value="mRNA"/>
</dbReference>
<dbReference type="RefSeq" id="NP_001409887.1">
    <property type="nucleotide sequence ID" value="NM_001422958.1"/>
</dbReference>
<dbReference type="RefSeq" id="XP_015611821.1">
    <property type="nucleotide sequence ID" value="XM_015756335.1"/>
</dbReference>
<dbReference type="SMR" id="Q652N5"/>
<dbReference type="FunCoup" id="Q652N5">
    <property type="interactions" value="794"/>
</dbReference>
<dbReference type="STRING" id="39947.Q652N5"/>
<dbReference type="PaxDb" id="39947-Q652N5"/>
<dbReference type="EnsemblPlants" id="Os09t0570400-01">
    <property type="protein sequence ID" value="Os09t0570400-01"/>
    <property type="gene ID" value="Os09g0570400"/>
</dbReference>
<dbReference type="GeneID" id="4347913"/>
<dbReference type="Gramene" id="Os09t0570400-01">
    <property type="protein sequence ID" value="Os09t0570400-01"/>
    <property type="gene ID" value="Os09g0570400"/>
</dbReference>
<dbReference type="KEGG" id="dosa:Os09g0570400"/>
<dbReference type="eggNOG" id="KOG2532">
    <property type="taxonomic scope" value="Eukaryota"/>
</dbReference>
<dbReference type="HOGENOM" id="CLU_001265_5_11_1"/>
<dbReference type="InParanoid" id="Q652N5"/>
<dbReference type="OMA" id="ECEYIQK"/>
<dbReference type="OrthoDB" id="2250022at2759"/>
<dbReference type="Proteomes" id="UP000000763">
    <property type="component" value="Chromosome 9"/>
</dbReference>
<dbReference type="Proteomes" id="UP000007752">
    <property type="component" value="Chromosome 9"/>
</dbReference>
<dbReference type="Proteomes" id="UP000059680">
    <property type="component" value="Chromosome 9"/>
</dbReference>
<dbReference type="GO" id="GO:0009706">
    <property type="term" value="C:chloroplast inner membrane"/>
    <property type="evidence" value="ECO:0007669"/>
    <property type="project" value="EnsemblPlants"/>
</dbReference>
<dbReference type="GO" id="GO:0015229">
    <property type="term" value="F:L-ascorbic acid transmembrane transporter activity"/>
    <property type="evidence" value="ECO:0007669"/>
    <property type="project" value="EnsemblPlants"/>
</dbReference>
<dbReference type="GO" id="GO:0005315">
    <property type="term" value="F:phosphate transmembrane transporter activity"/>
    <property type="evidence" value="ECO:0007669"/>
    <property type="project" value="EnsemblPlants"/>
</dbReference>
<dbReference type="GO" id="GO:0006811">
    <property type="term" value="P:monoatomic ion transport"/>
    <property type="evidence" value="ECO:0007669"/>
    <property type="project" value="UniProtKB-KW"/>
</dbReference>
<dbReference type="GO" id="GO:0010028">
    <property type="term" value="P:xanthophyll cycle"/>
    <property type="evidence" value="ECO:0007669"/>
    <property type="project" value="EnsemblPlants"/>
</dbReference>
<dbReference type="CDD" id="cd17380">
    <property type="entry name" value="MFS_SLC17A9_like"/>
    <property type="match status" value="1"/>
</dbReference>
<dbReference type="FunFam" id="1.20.1250.20:FF:000058">
    <property type="entry name" value="ascorbate transporter, chloroplastic isoform X1"/>
    <property type="match status" value="1"/>
</dbReference>
<dbReference type="FunFam" id="1.20.1250.20:FF:000086">
    <property type="entry name" value="ascorbate transporter, chloroplastic isoform X2"/>
    <property type="match status" value="1"/>
</dbReference>
<dbReference type="Gene3D" id="1.20.1250.20">
    <property type="entry name" value="MFS general substrate transporter like domains"/>
    <property type="match status" value="2"/>
</dbReference>
<dbReference type="InterPro" id="IPR011701">
    <property type="entry name" value="MFS"/>
</dbReference>
<dbReference type="InterPro" id="IPR020846">
    <property type="entry name" value="MFS_dom"/>
</dbReference>
<dbReference type="InterPro" id="IPR050382">
    <property type="entry name" value="MFS_Na/Anion_cotransporter"/>
</dbReference>
<dbReference type="InterPro" id="IPR036259">
    <property type="entry name" value="MFS_trans_sf"/>
</dbReference>
<dbReference type="InterPro" id="IPR044777">
    <property type="entry name" value="SLC17A9-like"/>
</dbReference>
<dbReference type="PANTHER" id="PTHR11662:SF255">
    <property type="entry name" value="ASCORBATE TRANSPORTER, CHLOROPLASTIC"/>
    <property type="match status" value="1"/>
</dbReference>
<dbReference type="PANTHER" id="PTHR11662">
    <property type="entry name" value="SOLUTE CARRIER FAMILY 17"/>
    <property type="match status" value="1"/>
</dbReference>
<dbReference type="Pfam" id="PF07690">
    <property type="entry name" value="MFS_1"/>
    <property type="match status" value="1"/>
</dbReference>
<dbReference type="SUPFAM" id="SSF103473">
    <property type="entry name" value="MFS general substrate transporter"/>
    <property type="match status" value="1"/>
</dbReference>
<dbReference type="PROSITE" id="PS50850">
    <property type="entry name" value="MFS"/>
    <property type="match status" value="1"/>
</dbReference>
<keyword id="KW-0150">Chloroplast</keyword>
<keyword id="KW-0406">Ion transport</keyword>
<keyword id="KW-0472">Membrane</keyword>
<keyword id="KW-0934">Plastid</keyword>
<keyword id="KW-1185">Reference proteome</keyword>
<keyword id="KW-0809">Transit peptide</keyword>
<keyword id="KW-0812">Transmembrane</keyword>
<keyword id="KW-1133">Transmembrane helix</keyword>
<keyword id="KW-0813">Transport</keyword>
<proteinExistence type="evidence at transcript level"/>
<feature type="transit peptide" description="Chloroplast" evidence="2">
    <location>
        <begin position="1"/>
        <end position="76"/>
    </location>
</feature>
<feature type="chain" id="PRO_0000383102" description="Probable anion transporter 4, chloroplastic">
    <location>
        <begin position="77"/>
        <end position="591"/>
    </location>
</feature>
<feature type="transmembrane region" description="Helical" evidence="2">
    <location>
        <begin position="184"/>
        <end position="204"/>
    </location>
</feature>
<feature type="transmembrane region" description="Helical" evidence="2">
    <location>
        <begin position="220"/>
        <end position="240"/>
    </location>
</feature>
<feature type="transmembrane region" description="Helical" evidence="2">
    <location>
        <begin position="249"/>
        <end position="269"/>
    </location>
</feature>
<feature type="transmembrane region" description="Helical" evidence="2">
    <location>
        <begin position="271"/>
        <end position="291"/>
    </location>
</feature>
<feature type="transmembrane region" description="Helical" evidence="2">
    <location>
        <begin position="313"/>
        <end position="333"/>
    </location>
</feature>
<feature type="transmembrane region" description="Helical" evidence="2">
    <location>
        <begin position="336"/>
        <end position="356"/>
    </location>
</feature>
<feature type="transmembrane region" description="Helical" evidence="2">
    <location>
        <begin position="402"/>
        <end position="422"/>
    </location>
</feature>
<feature type="transmembrane region" description="Helical" evidence="2">
    <location>
        <begin position="440"/>
        <end position="460"/>
    </location>
</feature>
<feature type="transmembrane region" description="Helical" evidence="2">
    <location>
        <begin position="475"/>
        <end position="495"/>
    </location>
</feature>
<feature type="transmembrane region" description="Helical" evidence="2">
    <location>
        <begin position="531"/>
        <end position="551"/>
    </location>
</feature>
<feature type="transmembrane region" description="Helical" evidence="2">
    <location>
        <begin position="565"/>
        <end position="585"/>
    </location>
</feature>
<feature type="region of interest" description="Disordered" evidence="3">
    <location>
        <begin position="1"/>
        <end position="38"/>
    </location>
</feature>
<feature type="compositionally biased region" description="Polar residues" evidence="3">
    <location>
        <begin position="8"/>
        <end position="36"/>
    </location>
</feature>
<gene>
    <name type="primary">PHT4;4</name>
    <name type="ordered locus">Os09g0570400</name>
    <name type="ordered locus">LOC_Os09g39680</name>
    <name type="ORF">OJ1003_C09.34</name>
    <name type="ORF">OsJ_30419</name>
</gene>
<comment type="function">
    <text evidence="1">Probable anion transporter.</text>
</comment>
<comment type="subcellular location">
    <subcellularLocation>
        <location evidence="4">Plastid</location>
        <location evidence="4">Chloroplast membrane</location>
        <topology evidence="4">Multi-pass membrane protein</topology>
    </subcellularLocation>
</comment>
<comment type="similarity">
    <text evidence="4">Belongs to the major facilitator superfamily. Sodium/anion cotransporter (TC 2.A.1.14) family.</text>
</comment>
<evidence type="ECO:0000250" key="1"/>
<evidence type="ECO:0000255" key="2"/>
<evidence type="ECO:0000256" key="3">
    <source>
        <dbReference type="SAM" id="MobiDB-lite"/>
    </source>
</evidence>
<evidence type="ECO:0000305" key="4"/>
<name>PHT44_ORYSJ</name>
<accession>Q652N5</accession>
<accession>A0A0P0XR66</accession>